<proteinExistence type="inferred from homology"/>
<sequence>MARLLALVIGYALSSFVLKLFTVLGVGIFTYVGLTALVDGFLNLLQPMLTGLPSYILDILAIAGVPEALSIVGSALLTRASINSAKAFVGVLT</sequence>
<gene>
    <name type="primary">VI</name>
</gene>
<feature type="chain" id="PRO_0000098214" description="Head virion protein G6P">
    <location>
        <begin position="1"/>
        <end position="93"/>
    </location>
</feature>
<feature type="transmembrane region" description="Helical" evidence="2">
    <location>
        <begin position="25"/>
        <end position="45"/>
    </location>
</feature>
<feature type="transmembrane region" description="Helical" evidence="2">
    <location>
        <begin position="56"/>
        <end position="76"/>
    </location>
</feature>
<accession>P03625</accession>
<keyword id="KW-1043">Host membrane</keyword>
<keyword id="KW-0472">Membrane</keyword>
<keyword id="KW-1185">Reference proteome</keyword>
<keyword id="KW-0812">Transmembrane</keyword>
<keyword id="KW-1133">Transmembrane helix</keyword>
<keyword id="KW-1162">Viral penetration into host cytoplasm</keyword>
<keyword id="KW-1241">Viral penetration into host cytoplasm via pilus retraction</keyword>
<keyword id="KW-0946">Virion</keyword>
<keyword id="KW-1160">Virus entry into host cell</keyword>
<dbReference type="EMBL" id="M19377">
    <property type="protein sequence ID" value="AAA88389.1"/>
    <property type="molecule type" value="Genomic_DNA"/>
</dbReference>
<dbReference type="EMBL" id="M11912">
    <property type="protein sequence ID" value="AAA88380.1"/>
    <property type="molecule type" value="Genomic_DNA"/>
</dbReference>
<dbReference type="PIR" id="A04233">
    <property type="entry name" value="Z9BP33"/>
</dbReference>
<dbReference type="RefSeq" id="NP_040654.1">
    <property type="nucleotide sequence ID" value="NC_001418.1"/>
</dbReference>
<dbReference type="KEGG" id="vg:1260907"/>
<dbReference type="Proteomes" id="UP000001719">
    <property type="component" value="Genome"/>
</dbReference>
<dbReference type="Proteomes" id="UP000009090">
    <property type="component" value="Genome"/>
</dbReference>
<dbReference type="GO" id="GO:0033644">
    <property type="term" value="C:host cell membrane"/>
    <property type="evidence" value="ECO:0007669"/>
    <property type="project" value="UniProtKB-SubCell"/>
</dbReference>
<dbReference type="GO" id="GO:0016020">
    <property type="term" value="C:membrane"/>
    <property type="evidence" value="ECO:0007669"/>
    <property type="project" value="UniProtKB-KW"/>
</dbReference>
<dbReference type="GO" id="GO:0044423">
    <property type="term" value="C:virion component"/>
    <property type="evidence" value="ECO:0007669"/>
    <property type="project" value="UniProtKB-KW"/>
</dbReference>
<dbReference type="GO" id="GO:0046718">
    <property type="term" value="P:symbiont entry into host cell"/>
    <property type="evidence" value="ECO:0007669"/>
    <property type="project" value="UniProtKB-KW"/>
</dbReference>
<dbReference type="InterPro" id="IPR019670">
    <property type="entry name" value="DUF2523"/>
</dbReference>
<dbReference type="Pfam" id="PF10734">
    <property type="entry name" value="DUF2523"/>
    <property type="match status" value="1"/>
</dbReference>
<protein>
    <recommendedName>
        <fullName>Head virion protein G6P</fullName>
    </recommendedName>
    <alternativeName>
        <fullName>Coat protein D</fullName>
    </alternativeName>
    <alternativeName>
        <fullName>G6P</fullName>
    </alternativeName>
</protein>
<name>G6P_BPPF3</name>
<evidence type="ECO:0000250" key="1"/>
<evidence type="ECO:0000255" key="2"/>
<evidence type="ECO:0000305" key="3"/>
<comment type="function">
    <text evidence="1">Plays essential roles both in the entry of the viral genome into the bacterial host and in budding process. The formation of the G3P-G6P complex termed adsorption complex is essential for correct termination of filamentous phage assembly (By similarity).</text>
</comment>
<comment type="subunit">
    <text evidence="1">Interacts with G3P; this interaction is required for proper integration of G3P and G6P into the virion.</text>
</comment>
<comment type="subcellular location">
    <subcellularLocation>
        <location evidence="3">Virion</location>
    </subcellularLocation>
    <subcellularLocation>
        <location evidence="3">Host membrane</location>
        <topology evidence="3">Multi-pass membrane protein</topology>
    </subcellularLocation>
    <text evidence="1">Prior to assembly, G6P is found associated with the bacterial host inner membrane. There are about five copies of G6P in the mature virion. They are located together with G3P at the head side of the filamentous virion (By similarity).</text>
</comment>
<comment type="similarity">
    <text evidence="3">Belongs to the inovirus G6P protein family.</text>
</comment>
<organism>
    <name type="scientific">Pseudomonas phage Pf3</name>
    <name type="common">Bacteriophage Pf3</name>
    <dbReference type="NCBI Taxonomy" id="10872"/>
    <lineage>
        <taxon>Viruses</taxon>
        <taxon>Monodnaviria</taxon>
        <taxon>Loebvirae</taxon>
        <taxon>Hofneiviricota</taxon>
        <taxon>Faserviricetes</taxon>
        <taxon>Tubulavirales</taxon>
        <taxon>Inoviridae</taxon>
        <taxon>Tertilicivirus</taxon>
        <taxon>Tertilicivirus Pf3</taxon>
    </lineage>
</organism>
<organismHost>
    <name type="scientific">Pseudomonas aeruginosa</name>
    <dbReference type="NCBI Taxonomy" id="287"/>
</organismHost>
<reference key="1">
    <citation type="journal article" date="1985" name="J. Virol.">
        <title>Nucleotide sequence of the genome of Pf3, an IncP-1 plasmid-specific filamentous bacteriophage of Pseudomonas aeruginosa.</title>
        <authorList>
            <person name="Luiten R.G.M."/>
            <person name="Putterman D.G."/>
            <person name="Schoenmakers J.G.G."/>
            <person name="Konings R.N.H."/>
            <person name="Day L.A."/>
        </authorList>
    </citation>
    <scope>NUCLEOTIDE SEQUENCE [GENOMIC DNA]</scope>
    <source>
        <strain>New York</strain>
        <strain>Nijmegen</strain>
    </source>
</reference>